<keyword id="KW-1185">Reference proteome</keyword>
<keyword id="KW-0687">Ribonucleoprotein</keyword>
<keyword id="KW-0689">Ribosomal protein</keyword>
<keyword id="KW-0694">RNA-binding</keyword>
<keyword id="KW-0699">rRNA-binding</keyword>
<evidence type="ECO:0000250" key="1"/>
<evidence type="ECO:0000255" key="2">
    <source>
        <dbReference type="HAMAP-Rule" id="MF_01326"/>
    </source>
</evidence>
<evidence type="ECO:0000305" key="3"/>
<reference key="1">
    <citation type="journal article" date="2002" name="Nucleic Acids Res.">
        <title>Genome sequence of Shigella flexneri 2a: insights into pathogenicity through comparison with genomes of Escherichia coli K12 and O157.</title>
        <authorList>
            <person name="Jin Q."/>
            <person name="Yuan Z."/>
            <person name="Xu J."/>
            <person name="Wang Y."/>
            <person name="Shen Y."/>
            <person name="Lu W."/>
            <person name="Wang J."/>
            <person name="Liu H."/>
            <person name="Yang J."/>
            <person name="Yang F."/>
            <person name="Zhang X."/>
            <person name="Zhang J."/>
            <person name="Yang G."/>
            <person name="Wu H."/>
            <person name="Qu D."/>
            <person name="Dong J."/>
            <person name="Sun L."/>
            <person name="Xue Y."/>
            <person name="Zhao A."/>
            <person name="Gao Y."/>
            <person name="Zhu J."/>
            <person name="Kan B."/>
            <person name="Ding K."/>
            <person name="Chen S."/>
            <person name="Cheng H."/>
            <person name="Yao Z."/>
            <person name="He B."/>
            <person name="Chen R."/>
            <person name="Ma D."/>
            <person name="Qiang B."/>
            <person name="Wen Y."/>
            <person name="Hou Y."/>
            <person name="Yu J."/>
        </authorList>
    </citation>
    <scope>NUCLEOTIDE SEQUENCE [LARGE SCALE GENOMIC DNA]</scope>
    <source>
        <strain>301 / Serotype 2a</strain>
    </source>
</reference>
<reference key="2">
    <citation type="journal article" date="2003" name="Infect. Immun.">
        <title>Complete genome sequence and comparative genomics of Shigella flexneri serotype 2a strain 2457T.</title>
        <authorList>
            <person name="Wei J."/>
            <person name="Goldberg M.B."/>
            <person name="Burland V."/>
            <person name="Venkatesan M.M."/>
            <person name="Deng W."/>
            <person name="Fournier G."/>
            <person name="Mayhew G.F."/>
            <person name="Plunkett G. III"/>
            <person name="Rose D.J."/>
            <person name="Darling A."/>
            <person name="Mau B."/>
            <person name="Perna N.T."/>
            <person name="Payne S.M."/>
            <person name="Runyen-Janecky L.J."/>
            <person name="Zhou S."/>
            <person name="Schwartz D.C."/>
            <person name="Blattner F.R."/>
        </authorList>
    </citation>
    <scope>NUCLEOTIDE SEQUENCE [LARGE SCALE GENOMIC DNA]</scope>
    <source>
        <strain>ATCC 700930 / 2457T / Serotype 2a</strain>
    </source>
</reference>
<gene>
    <name evidence="2" type="primary">rplX</name>
    <name type="ordered locus">SF3341</name>
    <name type="ordered locus">S4421</name>
</gene>
<feature type="initiator methionine" description="Removed" evidence="1">
    <location>
        <position position="1"/>
    </location>
</feature>
<feature type="chain" id="PRO_0000130711" description="Large ribosomal subunit protein uL24">
    <location>
        <begin position="2"/>
        <end position="104"/>
    </location>
</feature>
<accession>Q83PY8</accession>
<protein>
    <recommendedName>
        <fullName evidence="2">Large ribosomal subunit protein uL24</fullName>
    </recommendedName>
    <alternativeName>
        <fullName evidence="3">50S ribosomal protein L24</fullName>
    </alternativeName>
</protein>
<sequence>MAAKIRRDDEVIVLTGKDKGKRGKVKNVLSSGKVIIEGINLVKKHQKPVPALNQPGGIVEKEAAIQVSNVAIFNAATGKADRVGFRFEDGKKVRFFKSNSETIK</sequence>
<dbReference type="EMBL" id="AE005674">
    <property type="protein sequence ID" value="AAN44804.1"/>
    <property type="molecule type" value="Genomic_DNA"/>
</dbReference>
<dbReference type="EMBL" id="AE014073">
    <property type="protein sequence ID" value="AAP19372.1"/>
    <property type="molecule type" value="Genomic_DNA"/>
</dbReference>
<dbReference type="RefSeq" id="NP_709097.1">
    <property type="nucleotide sequence ID" value="NC_004337.2"/>
</dbReference>
<dbReference type="RefSeq" id="WP_000729180.1">
    <property type="nucleotide sequence ID" value="NZ_WPGW01000088.1"/>
</dbReference>
<dbReference type="SMR" id="Q83PY8"/>
<dbReference type="STRING" id="198214.SF3341"/>
<dbReference type="PaxDb" id="198214-SF3341"/>
<dbReference type="GeneID" id="1023963"/>
<dbReference type="KEGG" id="sfl:SF3341"/>
<dbReference type="KEGG" id="sfx:S4421"/>
<dbReference type="PATRIC" id="fig|198214.7.peg.3950"/>
<dbReference type="HOGENOM" id="CLU_093315_2_2_6"/>
<dbReference type="Proteomes" id="UP000001006">
    <property type="component" value="Chromosome"/>
</dbReference>
<dbReference type="Proteomes" id="UP000002673">
    <property type="component" value="Chromosome"/>
</dbReference>
<dbReference type="GO" id="GO:0005829">
    <property type="term" value="C:cytosol"/>
    <property type="evidence" value="ECO:0007669"/>
    <property type="project" value="UniProtKB-ARBA"/>
</dbReference>
<dbReference type="GO" id="GO:1990904">
    <property type="term" value="C:ribonucleoprotein complex"/>
    <property type="evidence" value="ECO:0007669"/>
    <property type="project" value="UniProtKB-KW"/>
</dbReference>
<dbReference type="GO" id="GO:0005840">
    <property type="term" value="C:ribosome"/>
    <property type="evidence" value="ECO:0007669"/>
    <property type="project" value="UniProtKB-KW"/>
</dbReference>
<dbReference type="GO" id="GO:0019843">
    <property type="term" value="F:rRNA binding"/>
    <property type="evidence" value="ECO:0007669"/>
    <property type="project" value="UniProtKB-UniRule"/>
</dbReference>
<dbReference type="GO" id="GO:0003735">
    <property type="term" value="F:structural constituent of ribosome"/>
    <property type="evidence" value="ECO:0007669"/>
    <property type="project" value="InterPro"/>
</dbReference>
<dbReference type="GO" id="GO:0006412">
    <property type="term" value="P:translation"/>
    <property type="evidence" value="ECO:0007669"/>
    <property type="project" value="UniProtKB-UniRule"/>
</dbReference>
<dbReference type="CDD" id="cd06089">
    <property type="entry name" value="KOW_RPL26"/>
    <property type="match status" value="1"/>
</dbReference>
<dbReference type="FunFam" id="2.30.30.30:FF:000004">
    <property type="entry name" value="50S ribosomal protein L24"/>
    <property type="match status" value="1"/>
</dbReference>
<dbReference type="Gene3D" id="2.30.30.30">
    <property type="match status" value="1"/>
</dbReference>
<dbReference type="HAMAP" id="MF_01326_B">
    <property type="entry name" value="Ribosomal_uL24_B"/>
    <property type="match status" value="1"/>
</dbReference>
<dbReference type="InterPro" id="IPR005824">
    <property type="entry name" value="KOW"/>
</dbReference>
<dbReference type="InterPro" id="IPR014722">
    <property type="entry name" value="Rib_uL2_dom2"/>
</dbReference>
<dbReference type="InterPro" id="IPR003256">
    <property type="entry name" value="Ribosomal_uL24"/>
</dbReference>
<dbReference type="InterPro" id="IPR005825">
    <property type="entry name" value="Ribosomal_uL24_CS"/>
</dbReference>
<dbReference type="InterPro" id="IPR041988">
    <property type="entry name" value="Ribosomal_uL24_KOW"/>
</dbReference>
<dbReference type="InterPro" id="IPR008991">
    <property type="entry name" value="Translation_prot_SH3-like_sf"/>
</dbReference>
<dbReference type="NCBIfam" id="TIGR01079">
    <property type="entry name" value="rplX_bact"/>
    <property type="match status" value="1"/>
</dbReference>
<dbReference type="PANTHER" id="PTHR12903">
    <property type="entry name" value="MITOCHONDRIAL RIBOSOMAL PROTEIN L24"/>
    <property type="match status" value="1"/>
</dbReference>
<dbReference type="Pfam" id="PF00467">
    <property type="entry name" value="KOW"/>
    <property type="match status" value="1"/>
</dbReference>
<dbReference type="Pfam" id="PF17136">
    <property type="entry name" value="ribosomal_L24"/>
    <property type="match status" value="1"/>
</dbReference>
<dbReference type="SMART" id="SM00739">
    <property type="entry name" value="KOW"/>
    <property type="match status" value="1"/>
</dbReference>
<dbReference type="SUPFAM" id="SSF50104">
    <property type="entry name" value="Translation proteins SH3-like domain"/>
    <property type="match status" value="1"/>
</dbReference>
<dbReference type="PROSITE" id="PS01108">
    <property type="entry name" value="RIBOSOMAL_L24"/>
    <property type="match status" value="1"/>
</dbReference>
<proteinExistence type="inferred from homology"/>
<name>RL24_SHIFL</name>
<comment type="function">
    <text evidence="2">One of two assembly initiator proteins, it binds directly to the 5'-end of the 23S rRNA, where it nucleates assembly of the 50S subunit.</text>
</comment>
<comment type="function">
    <text evidence="2">One of the proteins that surrounds the polypeptide exit tunnel on the outside of the subunit.</text>
</comment>
<comment type="subunit">
    <text evidence="2">Part of the 50S ribosomal subunit.</text>
</comment>
<comment type="similarity">
    <text evidence="2">Belongs to the universal ribosomal protein uL24 family.</text>
</comment>
<organism>
    <name type="scientific">Shigella flexneri</name>
    <dbReference type="NCBI Taxonomy" id="623"/>
    <lineage>
        <taxon>Bacteria</taxon>
        <taxon>Pseudomonadati</taxon>
        <taxon>Pseudomonadota</taxon>
        <taxon>Gammaproteobacteria</taxon>
        <taxon>Enterobacterales</taxon>
        <taxon>Enterobacteriaceae</taxon>
        <taxon>Shigella</taxon>
    </lineage>
</organism>